<dbReference type="EMBL" id="CR382126">
    <property type="protein sequence ID" value="CAG98115.1"/>
    <property type="molecule type" value="Genomic_DNA"/>
</dbReference>
<dbReference type="RefSeq" id="XP_455407.1">
    <property type="nucleotide sequence ID" value="XM_455407.1"/>
</dbReference>
<dbReference type="SMR" id="Q6CKY2"/>
<dbReference type="FunCoup" id="Q6CKY2">
    <property type="interactions" value="39"/>
</dbReference>
<dbReference type="STRING" id="284590.Q6CKY2"/>
<dbReference type="PaxDb" id="284590-Q6CKY2"/>
<dbReference type="KEGG" id="kla:KLLA0_F07205g"/>
<dbReference type="eggNOG" id="ENOG502S7S0">
    <property type="taxonomic scope" value="Eukaryota"/>
</dbReference>
<dbReference type="HOGENOM" id="CLU_033252_0_0_1"/>
<dbReference type="InParanoid" id="Q6CKY2"/>
<dbReference type="OMA" id="TRSHIFQ"/>
<dbReference type="Proteomes" id="UP000000598">
    <property type="component" value="Chromosome F"/>
</dbReference>
<dbReference type="GO" id="GO:0031965">
    <property type="term" value="C:nuclear membrane"/>
    <property type="evidence" value="ECO:0007669"/>
    <property type="project" value="UniProtKB-SubCell"/>
</dbReference>
<dbReference type="GO" id="GO:0043007">
    <property type="term" value="P:maintenance of rDNA"/>
    <property type="evidence" value="ECO:0007669"/>
    <property type="project" value="TreeGrafter"/>
</dbReference>
<dbReference type="GO" id="GO:0007096">
    <property type="term" value="P:regulation of exit from mitosis"/>
    <property type="evidence" value="ECO:0007669"/>
    <property type="project" value="TreeGrafter"/>
</dbReference>
<dbReference type="InterPro" id="IPR018819">
    <property type="entry name" value="Nur1/Mug154"/>
</dbReference>
<dbReference type="PANTHER" id="PTHR28293">
    <property type="entry name" value="NUCLEAR RIM PROTEIN 1"/>
    <property type="match status" value="1"/>
</dbReference>
<dbReference type="PANTHER" id="PTHR28293:SF1">
    <property type="entry name" value="NUCLEAR RIM PROTEIN 1"/>
    <property type="match status" value="1"/>
</dbReference>
<dbReference type="Pfam" id="PF10332">
    <property type="entry name" value="DUF2418"/>
    <property type="match status" value="1"/>
</dbReference>
<name>NUR1_KLULA</name>
<comment type="function">
    <text evidence="1">Member of a perinuclear network that controls recombination at multiple loci to maintain genome stability. Required for rDNA repeat stability (By similarity).</text>
</comment>
<comment type="subcellular location">
    <subcellularLocation>
        <location evidence="1">Nucleus membrane</location>
        <topology evidence="1">Multi-pass membrane protein</topology>
    </subcellularLocation>
</comment>
<comment type="similarity">
    <text evidence="4">Belongs to the NUR1 family.</text>
</comment>
<protein>
    <recommendedName>
        <fullName>Nuclear rim protein 1</fullName>
    </recommendedName>
</protein>
<accession>Q6CKY2</accession>
<reference key="1">
    <citation type="journal article" date="2004" name="Nature">
        <title>Genome evolution in yeasts.</title>
        <authorList>
            <person name="Dujon B."/>
            <person name="Sherman D."/>
            <person name="Fischer G."/>
            <person name="Durrens P."/>
            <person name="Casaregola S."/>
            <person name="Lafontaine I."/>
            <person name="de Montigny J."/>
            <person name="Marck C."/>
            <person name="Neuveglise C."/>
            <person name="Talla E."/>
            <person name="Goffard N."/>
            <person name="Frangeul L."/>
            <person name="Aigle M."/>
            <person name="Anthouard V."/>
            <person name="Babour A."/>
            <person name="Barbe V."/>
            <person name="Barnay S."/>
            <person name="Blanchin S."/>
            <person name="Beckerich J.-M."/>
            <person name="Beyne E."/>
            <person name="Bleykasten C."/>
            <person name="Boisrame A."/>
            <person name="Boyer J."/>
            <person name="Cattolico L."/>
            <person name="Confanioleri F."/>
            <person name="de Daruvar A."/>
            <person name="Despons L."/>
            <person name="Fabre E."/>
            <person name="Fairhead C."/>
            <person name="Ferry-Dumazet H."/>
            <person name="Groppi A."/>
            <person name="Hantraye F."/>
            <person name="Hennequin C."/>
            <person name="Jauniaux N."/>
            <person name="Joyet P."/>
            <person name="Kachouri R."/>
            <person name="Kerrest A."/>
            <person name="Koszul R."/>
            <person name="Lemaire M."/>
            <person name="Lesur I."/>
            <person name="Ma L."/>
            <person name="Muller H."/>
            <person name="Nicaud J.-M."/>
            <person name="Nikolski M."/>
            <person name="Oztas S."/>
            <person name="Ozier-Kalogeropoulos O."/>
            <person name="Pellenz S."/>
            <person name="Potier S."/>
            <person name="Richard G.-F."/>
            <person name="Straub M.-L."/>
            <person name="Suleau A."/>
            <person name="Swennen D."/>
            <person name="Tekaia F."/>
            <person name="Wesolowski-Louvel M."/>
            <person name="Westhof E."/>
            <person name="Wirth B."/>
            <person name="Zeniou-Meyer M."/>
            <person name="Zivanovic Y."/>
            <person name="Bolotin-Fukuhara M."/>
            <person name="Thierry A."/>
            <person name="Bouchier C."/>
            <person name="Caudron B."/>
            <person name="Scarpelli C."/>
            <person name="Gaillardin C."/>
            <person name="Weissenbach J."/>
            <person name="Wincker P."/>
            <person name="Souciet J.-L."/>
        </authorList>
    </citation>
    <scope>NUCLEOTIDE SEQUENCE [LARGE SCALE GENOMIC DNA]</scope>
    <source>
        <strain>ATCC 8585 / CBS 2359 / DSM 70799 / NBRC 1267 / NRRL Y-1140 / WM37</strain>
    </source>
</reference>
<organism>
    <name type="scientific">Kluyveromyces lactis (strain ATCC 8585 / CBS 2359 / DSM 70799 / NBRC 1267 / NRRL Y-1140 / WM37)</name>
    <name type="common">Yeast</name>
    <name type="synonym">Candida sphaerica</name>
    <dbReference type="NCBI Taxonomy" id="284590"/>
    <lineage>
        <taxon>Eukaryota</taxon>
        <taxon>Fungi</taxon>
        <taxon>Dikarya</taxon>
        <taxon>Ascomycota</taxon>
        <taxon>Saccharomycotina</taxon>
        <taxon>Saccharomycetes</taxon>
        <taxon>Saccharomycetales</taxon>
        <taxon>Saccharomycetaceae</taxon>
        <taxon>Kluyveromyces</taxon>
    </lineage>
</organism>
<gene>
    <name type="primary">NUR1</name>
    <name type="ordered locus">KLLA0F07205g</name>
</gene>
<keyword id="KW-0472">Membrane</keyword>
<keyword id="KW-0539">Nucleus</keyword>
<keyword id="KW-1185">Reference proteome</keyword>
<keyword id="KW-0812">Transmembrane</keyword>
<keyword id="KW-1133">Transmembrane helix</keyword>
<evidence type="ECO:0000250" key="1"/>
<evidence type="ECO:0000255" key="2"/>
<evidence type="ECO:0000256" key="3">
    <source>
        <dbReference type="SAM" id="MobiDB-lite"/>
    </source>
</evidence>
<evidence type="ECO:0000305" key="4"/>
<sequence length="546" mass="64087">MAFWRNRHESPAISQERSPSPDRFQNSEDIREDNNNYNEDEKLGWFASFMGMFSLPYDWYLSINEDIAVIDWDSKSNSVAWPLGNVLTFLFFSVRLLQDNVIAPNINKLTHSDDAFDFSKSKNLQKYDYFQQYGGSASSSENLYYKMLRQLHRLFYLLTVLLLITNISVTYRYLFAHFQTYSIFYWKTVPKSKNVTKKSLHDLNHTYVEDAKRDSLWGMIKYLLFNGSHDDETNRAHYYELRKWTPSRFLTSFFVSFSPIAFCFLWMTDVTFKTLIPIIIHQYVLWFIVIDRYEQKLKDEQILSMSSVAELNSKVIQPKMNVLKQDAMVDATPYNDGIVYFYPAYTTTRSHVFATHTLSGKLSKEKYNPRTDSFEDANSQRTENYVRFSYHHPKSINGAYVRESYPSRQHSPRLSPSRYSHLQSGNTPSAPSTPLLIPSQQPHFDHSMLANASRNHNISERRNSHSPIKQHFANRLLNYPDETNDSIPDVSDDRFRMDDRFRRGRQGYFNRSPDINSGTLHYDDGDDDDNRISKSPFRNSSSSPFR</sequence>
<proteinExistence type="inferred from homology"/>
<feature type="chain" id="PRO_0000409029" description="Nuclear rim protein 1">
    <location>
        <begin position="1"/>
        <end position="546"/>
    </location>
</feature>
<feature type="transmembrane region" description="Helical" evidence="2">
    <location>
        <begin position="155"/>
        <end position="175"/>
    </location>
</feature>
<feature type="transmembrane region" description="Helical" evidence="2">
    <location>
        <begin position="249"/>
        <end position="269"/>
    </location>
</feature>
<feature type="region of interest" description="Disordered" evidence="3">
    <location>
        <begin position="1"/>
        <end position="35"/>
    </location>
</feature>
<feature type="region of interest" description="Disordered" evidence="3">
    <location>
        <begin position="405"/>
        <end position="441"/>
    </location>
</feature>
<feature type="region of interest" description="Disordered" evidence="3">
    <location>
        <begin position="505"/>
        <end position="546"/>
    </location>
</feature>
<feature type="compositionally biased region" description="Basic and acidic residues" evidence="3">
    <location>
        <begin position="1"/>
        <end position="10"/>
    </location>
</feature>
<feature type="compositionally biased region" description="Basic and acidic residues" evidence="3">
    <location>
        <begin position="25"/>
        <end position="35"/>
    </location>
</feature>
<feature type="compositionally biased region" description="Polar residues" evidence="3">
    <location>
        <begin position="406"/>
        <end position="441"/>
    </location>
</feature>
<feature type="compositionally biased region" description="Low complexity" evidence="3">
    <location>
        <begin position="533"/>
        <end position="546"/>
    </location>
</feature>